<sequence>MLFALPALNDNYIWLYQRENLPLIIVDLPETDKLFAWLEKQNATIEAVLLTHEHDDHTQGVSAFKKRYPTVPIYGPQECEKKGATQIVNEGKILTANYQIDVIPTGGHTKQHVSFLVDNHLFCGDALFSAGCGRVFTGNYALMFEGLQRLNTLPDETIVCPAHEYTLGNLAFAETVLVDKSAVEKSAVEKQRIFVETQRAENKPSLPTTLKLEREINPFLQAKTLEEFTALRKAKDIF</sequence>
<protein>
    <recommendedName>
        <fullName evidence="1">Hydroxyacylglutathione hydrolase</fullName>
        <ecNumber evidence="1">3.1.2.6</ecNumber>
    </recommendedName>
    <alternativeName>
        <fullName evidence="1">Glyoxalase II</fullName>
        <shortName evidence="1">Glx II</shortName>
    </alternativeName>
</protein>
<gene>
    <name evidence="1" type="primary">gloB</name>
    <name type="ordered locus">HI_1274</name>
</gene>
<accession>P71374</accession>
<reference key="1">
    <citation type="journal article" date="1995" name="Science">
        <title>Whole-genome random sequencing and assembly of Haemophilus influenzae Rd.</title>
        <authorList>
            <person name="Fleischmann R.D."/>
            <person name="Adams M.D."/>
            <person name="White O."/>
            <person name="Clayton R.A."/>
            <person name="Kirkness E.F."/>
            <person name="Kerlavage A.R."/>
            <person name="Bult C.J."/>
            <person name="Tomb J.-F."/>
            <person name="Dougherty B.A."/>
            <person name="Merrick J.M."/>
            <person name="McKenney K."/>
            <person name="Sutton G.G."/>
            <person name="FitzHugh W."/>
            <person name="Fields C.A."/>
            <person name="Gocayne J.D."/>
            <person name="Scott J.D."/>
            <person name="Shirley R."/>
            <person name="Liu L.-I."/>
            <person name="Glodek A."/>
            <person name="Kelley J.M."/>
            <person name="Weidman J.F."/>
            <person name="Phillips C.A."/>
            <person name="Spriggs T."/>
            <person name="Hedblom E."/>
            <person name="Cotton M.D."/>
            <person name="Utterback T.R."/>
            <person name="Hanna M.C."/>
            <person name="Nguyen D.T."/>
            <person name="Saudek D.M."/>
            <person name="Brandon R.C."/>
            <person name="Fine L.D."/>
            <person name="Fritchman J.L."/>
            <person name="Fuhrmann J.L."/>
            <person name="Geoghagen N.S.M."/>
            <person name="Gnehm C.L."/>
            <person name="McDonald L.A."/>
            <person name="Small K.V."/>
            <person name="Fraser C.M."/>
            <person name="Smith H.O."/>
            <person name="Venter J.C."/>
        </authorList>
    </citation>
    <scope>NUCLEOTIDE SEQUENCE [LARGE SCALE GENOMIC DNA]</scope>
    <source>
        <strain>ATCC 51907 / DSM 11121 / KW20 / Rd</strain>
    </source>
</reference>
<dbReference type="EC" id="3.1.2.6" evidence="1"/>
<dbReference type="EMBL" id="L42023">
    <property type="protein sequence ID" value="AAC22922.1"/>
    <property type="molecule type" value="Genomic_DNA"/>
</dbReference>
<dbReference type="PIR" id="G64113">
    <property type="entry name" value="G64113"/>
</dbReference>
<dbReference type="RefSeq" id="NP_439427.1">
    <property type="nucleotide sequence ID" value="NC_000907.1"/>
</dbReference>
<dbReference type="SMR" id="P71374"/>
<dbReference type="STRING" id="71421.HI_1274"/>
<dbReference type="EnsemblBacteria" id="AAC22922">
    <property type="protein sequence ID" value="AAC22922"/>
    <property type="gene ID" value="HI_1274"/>
</dbReference>
<dbReference type="KEGG" id="hin:HI_1274"/>
<dbReference type="PATRIC" id="fig|71421.8.peg.1325"/>
<dbReference type="eggNOG" id="COG0491">
    <property type="taxonomic scope" value="Bacteria"/>
</dbReference>
<dbReference type="HOGENOM" id="CLU_030571_4_1_6"/>
<dbReference type="OrthoDB" id="9802248at2"/>
<dbReference type="PhylomeDB" id="P71374"/>
<dbReference type="BioCyc" id="HINF71421:G1GJ1-1299-MONOMER"/>
<dbReference type="UniPathway" id="UPA00619">
    <property type="reaction ID" value="UER00676"/>
</dbReference>
<dbReference type="Proteomes" id="UP000000579">
    <property type="component" value="Chromosome"/>
</dbReference>
<dbReference type="GO" id="GO:0004416">
    <property type="term" value="F:hydroxyacylglutathione hydrolase activity"/>
    <property type="evidence" value="ECO:0007669"/>
    <property type="project" value="UniProtKB-UniRule"/>
</dbReference>
<dbReference type="GO" id="GO:0046872">
    <property type="term" value="F:metal ion binding"/>
    <property type="evidence" value="ECO:0007669"/>
    <property type="project" value="UniProtKB-KW"/>
</dbReference>
<dbReference type="GO" id="GO:0019243">
    <property type="term" value="P:methylglyoxal catabolic process to D-lactate via S-lactoyl-glutathione"/>
    <property type="evidence" value="ECO:0007669"/>
    <property type="project" value="InterPro"/>
</dbReference>
<dbReference type="CDD" id="cd07723">
    <property type="entry name" value="hydroxyacylglutathione_hydrolase_MBL-fold"/>
    <property type="match status" value="1"/>
</dbReference>
<dbReference type="Gene3D" id="3.60.15.10">
    <property type="entry name" value="Ribonuclease Z/Hydroxyacylglutathione hydrolase-like"/>
    <property type="match status" value="1"/>
</dbReference>
<dbReference type="HAMAP" id="MF_01374">
    <property type="entry name" value="Glyoxalase_2"/>
    <property type="match status" value="1"/>
</dbReference>
<dbReference type="InterPro" id="IPR035680">
    <property type="entry name" value="Clx_II_MBL"/>
</dbReference>
<dbReference type="InterPro" id="IPR050110">
    <property type="entry name" value="Glyoxalase_II_hydrolase"/>
</dbReference>
<dbReference type="InterPro" id="IPR032282">
    <property type="entry name" value="HAGH_C"/>
</dbReference>
<dbReference type="InterPro" id="IPR017782">
    <property type="entry name" value="Hydroxyacylglutathione_Hdrlase"/>
</dbReference>
<dbReference type="InterPro" id="IPR001279">
    <property type="entry name" value="Metallo-B-lactamas"/>
</dbReference>
<dbReference type="InterPro" id="IPR036866">
    <property type="entry name" value="RibonucZ/Hydroxyglut_hydro"/>
</dbReference>
<dbReference type="NCBIfam" id="TIGR03413">
    <property type="entry name" value="GSH_gloB"/>
    <property type="match status" value="1"/>
</dbReference>
<dbReference type="PANTHER" id="PTHR43705">
    <property type="entry name" value="HYDROXYACYLGLUTATHIONE HYDROLASE"/>
    <property type="match status" value="1"/>
</dbReference>
<dbReference type="PANTHER" id="PTHR43705:SF1">
    <property type="entry name" value="HYDROXYACYLGLUTATHIONE HYDROLASE GLOB"/>
    <property type="match status" value="1"/>
</dbReference>
<dbReference type="Pfam" id="PF16123">
    <property type="entry name" value="HAGH_C"/>
    <property type="match status" value="1"/>
</dbReference>
<dbReference type="Pfam" id="PF00753">
    <property type="entry name" value="Lactamase_B"/>
    <property type="match status" value="1"/>
</dbReference>
<dbReference type="SMART" id="SM00849">
    <property type="entry name" value="Lactamase_B"/>
    <property type="match status" value="1"/>
</dbReference>
<dbReference type="SUPFAM" id="SSF56281">
    <property type="entry name" value="Metallo-hydrolase/oxidoreductase"/>
    <property type="match status" value="1"/>
</dbReference>
<name>GLO2_HAEIN</name>
<proteinExistence type="inferred from homology"/>
<comment type="function">
    <text evidence="1">Thiolesterase that catalyzes the hydrolysis of S-D-lactoyl-glutathione to form glutathione and D-lactic acid.</text>
</comment>
<comment type="catalytic activity">
    <reaction evidence="1">
        <text>an S-(2-hydroxyacyl)glutathione + H2O = a 2-hydroxy carboxylate + glutathione + H(+)</text>
        <dbReference type="Rhea" id="RHEA:21864"/>
        <dbReference type="ChEBI" id="CHEBI:15377"/>
        <dbReference type="ChEBI" id="CHEBI:15378"/>
        <dbReference type="ChEBI" id="CHEBI:57925"/>
        <dbReference type="ChEBI" id="CHEBI:58896"/>
        <dbReference type="ChEBI" id="CHEBI:71261"/>
        <dbReference type="EC" id="3.1.2.6"/>
    </reaction>
</comment>
<comment type="cofactor">
    <cofactor evidence="1">
        <name>Zn(2+)</name>
        <dbReference type="ChEBI" id="CHEBI:29105"/>
    </cofactor>
    <text evidence="1">Binds 2 Zn(2+) ions per subunit.</text>
</comment>
<comment type="pathway">
    <text evidence="1">Secondary metabolite metabolism; methylglyoxal degradation; (R)-lactate from methylglyoxal: step 2/2.</text>
</comment>
<comment type="subunit">
    <text evidence="1">Monomer.</text>
</comment>
<comment type="similarity">
    <text evidence="1">Belongs to the metallo-beta-lactamase superfamily. Glyoxalase II family.</text>
</comment>
<feature type="chain" id="PRO_0000192353" description="Hydroxyacylglutathione hydrolase">
    <location>
        <begin position="1"/>
        <end position="238"/>
    </location>
</feature>
<feature type="binding site" evidence="1">
    <location>
        <position position="52"/>
    </location>
    <ligand>
        <name>Zn(2+)</name>
        <dbReference type="ChEBI" id="CHEBI:29105"/>
        <label>1</label>
    </ligand>
</feature>
<feature type="binding site" evidence="1">
    <location>
        <position position="54"/>
    </location>
    <ligand>
        <name>Zn(2+)</name>
        <dbReference type="ChEBI" id="CHEBI:29105"/>
        <label>1</label>
    </ligand>
</feature>
<feature type="binding site" evidence="1">
    <location>
        <position position="56"/>
    </location>
    <ligand>
        <name>Zn(2+)</name>
        <dbReference type="ChEBI" id="CHEBI:29105"/>
        <label>2</label>
    </ligand>
</feature>
<feature type="binding site" evidence="1">
    <location>
        <position position="57"/>
    </location>
    <ligand>
        <name>Zn(2+)</name>
        <dbReference type="ChEBI" id="CHEBI:29105"/>
        <label>2</label>
    </ligand>
</feature>
<feature type="binding site" evidence="1">
    <location>
        <position position="108"/>
    </location>
    <ligand>
        <name>Zn(2+)</name>
        <dbReference type="ChEBI" id="CHEBI:29105"/>
        <label>1</label>
    </ligand>
</feature>
<feature type="binding site" evidence="1">
    <location>
        <position position="125"/>
    </location>
    <ligand>
        <name>Zn(2+)</name>
        <dbReference type="ChEBI" id="CHEBI:29105"/>
        <label>1</label>
    </ligand>
</feature>
<feature type="binding site" evidence="1">
    <location>
        <position position="125"/>
    </location>
    <ligand>
        <name>Zn(2+)</name>
        <dbReference type="ChEBI" id="CHEBI:29105"/>
        <label>2</label>
    </ligand>
</feature>
<feature type="binding site" evidence="1">
    <location>
        <position position="163"/>
    </location>
    <ligand>
        <name>Zn(2+)</name>
        <dbReference type="ChEBI" id="CHEBI:29105"/>
        <label>2</label>
    </ligand>
</feature>
<organism>
    <name type="scientific">Haemophilus influenzae (strain ATCC 51907 / DSM 11121 / KW20 / Rd)</name>
    <dbReference type="NCBI Taxonomy" id="71421"/>
    <lineage>
        <taxon>Bacteria</taxon>
        <taxon>Pseudomonadati</taxon>
        <taxon>Pseudomonadota</taxon>
        <taxon>Gammaproteobacteria</taxon>
        <taxon>Pasteurellales</taxon>
        <taxon>Pasteurellaceae</taxon>
        <taxon>Haemophilus</taxon>
    </lineage>
</organism>
<evidence type="ECO:0000255" key="1">
    <source>
        <dbReference type="HAMAP-Rule" id="MF_01374"/>
    </source>
</evidence>
<keyword id="KW-0378">Hydrolase</keyword>
<keyword id="KW-0479">Metal-binding</keyword>
<keyword id="KW-1185">Reference proteome</keyword>
<keyword id="KW-0862">Zinc</keyword>